<comment type="cofactor">
    <cofactor evidence="1">
        <name>Zn(2+)</name>
        <dbReference type="ChEBI" id="CHEBI:29105"/>
    </cofactor>
    <text evidence="1">Binds 2 Zn(2+) ions per subunit.</text>
</comment>
<comment type="subcellular location">
    <subcellularLocation>
        <location evidence="3">Secreted</location>
    </subcellularLocation>
</comment>
<comment type="similarity">
    <text evidence="3">Belongs to the peptidase M20A family.</text>
</comment>
<organism>
    <name type="scientific">Talaromyces marneffei (strain ATCC 18224 / CBS 334.59 / QM 7333)</name>
    <name type="common">Penicillium marneffei</name>
    <dbReference type="NCBI Taxonomy" id="441960"/>
    <lineage>
        <taxon>Eukaryota</taxon>
        <taxon>Fungi</taxon>
        <taxon>Dikarya</taxon>
        <taxon>Ascomycota</taxon>
        <taxon>Pezizomycotina</taxon>
        <taxon>Eurotiomycetes</taxon>
        <taxon>Eurotiomycetidae</taxon>
        <taxon>Eurotiales</taxon>
        <taxon>Trichocomaceae</taxon>
        <taxon>Talaromyces</taxon>
        <taxon>Talaromyces sect. Talaromyces</taxon>
    </lineage>
</organism>
<evidence type="ECO:0000250" key="1"/>
<evidence type="ECO:0000255" key="2"/>
<evidence type="ECO:0000305" key="3"/>
<protein>
    <recommendedName>
        <fullName>Probable carboxypeptidase PMAA_093910</fullName>
        <ecNumber>3.4.17.-</ecNumber>
    </recommendedName>
    <alternativeName>
        <fullName>Peptidase M20 domain-containing protein PMAA_093910</fullName>
    </alternativeName>
</protein>
<feature type="signal peptide" evidence="2">
    <location>
        <begin position="1"/>
        <end position="19"/>
    </location>
</feature>
<feature type="chain" id="PRO_0000411240" description="Probable carboxypeptidase PMAA_093910">
    <location>
        <begin position="20"/>
        <end position="451"/>
    </location>
</feature>
<feature type="active site" description="Proton acceptor" evidence="1">
    <location>
        <position position="203"/>
    </location>
</feature>
<feature type="binding site" evidence="1">
    <location>
        <position position="171"/>
    </location>
    <ligand>
        <name>Zn(2+)</name>
        <dbReference type="ChEBI" id="CHEBI:29105"/>
        <label>1</label>
    </ligand>
</feature>
<feature type="binding site" evidence="1">
    <location>
        <position position="171"/>
    </location>
    <ligand>
        <name>Zn(2+)</name>
        <dbReference type="ChEBI" id="CHEBI:29105"/>
        <label>2</label>
    </ligand>
</feature>
<feature type="binding site" evidence="1">
    <location>
        <position position="204"/>
    </location>
    <ligand>
        <name>Zn(2+)</name>
        <dbReference type="ChEBI" id="CHEBI:29105"/>
        <label>1</label>
    </ligand>
</feature>
<feature type="glycosylation site" description="N-linked (GlcNAc...) asparagine" evidence="2">
    <location>
        <position position="149"/>
    </location>
</feature>
<feature type="glycosylation site" description="N-linked (GlcNAc...) asparagine" evidence="2">
    <location>
        <position position="354"/>
    </location>
</feature>
<sequence length="451" mass="48575">MKVSSLLPSVLLLVGATRASPHPAQPPQQQPLNNIIEESNTQTNPPNKHDLEHVIDTSPLLSLHRDLVKFESISGNEADVGDFLIQYLQARDFKVEKQIVVPKGPKGQGERFNIYAYPNSTPEPRVLLSSHMDTVPPYIPYSLDLPSSNGSTTDSLNWRDNILIAGRGSVDAKASVASQILAVLEYLQLHPEAPLGLLFVVGEEVDGIGMQYFSQSELNTSPPTVHTVIFGEPTELALVSGHKGSLFFKISAKGKAAHSGYPWLGQSAVSALLPALVKLDTLADIPVEDGGIPGSEKLGKSTINIGRIDAGIASNVVPASAEASVNIRLAYHDVEKVKEIVTKAVDEATNGDENVTIEWGNKGKGHAPIDFDTDVDGFKVMTVNYATDAWYLKFHEGSGGSPEGRVHTYLYGPGSIFVAHGADEAITVRDLEDAVSGYKKLIEAAFERNKV</sequence>
<dbReference type="EC" id="3.4.17.-"/>
<dbReference type="EMBL" id="DS995902">
    <property type="protein sequence ID" value="EEA22777.1"/>
    <property type="molecule type" value="Genomic_DNA"/>
</dbReference>
<dbReference type="RefSeq" id="XP_002148944.1">
    <property type="nucleotide sequence ID" value="XM_002148908.1"/>
</dbReference>
<dbReference type="SMR" id="B6QHD2"/>
<dbReference type="STRING" id="441960.B6QHD2"/>
<dbReference type="VEuPathDB" id="FungiDB:PMAA_093910"/>
<dbReference type="HOGENOM" id="CLU_021802_3_0_1"/>
<dbReference type="OrthoDB" id="5215at28568"/>
<dbReference type="PhylomeDB" id="B6QHD2"/>
<dbReference type="Proteomes" id="UP000001294">
    <property type="component" value="Unassembled WGS sequence"/>
</dbReference>
<dbReference type="GO" id="GO:0005576">
    <property type="term" value="C:extracellular region"/>
    <property type="evidence" value="ECO:0007669"/>
    <property type="project" value="UniProtKB-SubCell"/>
</dbReference>
<dbReference type="GO" id="GO:0046872">
    <property type="term" value="F:metal ion binding"/>
    <property type="evidence" value="ECO:0007669"/>
    <property type="project" value="UniProtKB-KW"/>
</dbReference>
<dbReference type="GO" id="GO:0008233">
    <property type="term" value="F:peptidase activity"/>
    <property type="evidence" value="ECO:0007669"/>
    <property type="project" value="UniProtKB-KW"/>
</dbReference>
<dbReference type="GO" id="GO:0006508">
    <property type="term" value="P:proteolysis"/>
    <property type="evidence" value="ECO:0007669"/>
    <property type="project" value="UniProtKB-KW"/>
</dbReference>
<dbReference type="CDD" id="cd05652">
    <property type="entry name" value="M20_ArgE_DapE-like_fungal"/>
    <property type="match status" value="1"/>
</dbReference>
<dbReference type="Gene3D" id="3.30.70.360">
    <property type="match status" value="1"/>
</dbReference>
<dbReference type="Gene3D" id="3.40.630.10">
    <property type="entry name" value="Zn peptidases"/>
    <property type="match status" value="1"/>
</dbReference>
<dbReference type="InterPro" id="IPR001261">
    <property type="entry name" value="ArgE/DapE_CS"/>
</dbReference>
<dbReference type="InterPro" id="IPR036264">
    <property type="entry name" value="Bact_exopeptidase_dim_dom"/>
</dbReference>
<dbReference type="InterPro" id="IPR002933">
    <property type="entry name" value="Peptidase_M20"/>
</dbReference>
<dbReference type="InterPro" id="IPR011650">
    <property type="entry name" value="Peptidase_M20_dimer"/>
</dbReference>
<dbReference type="InterPro" id="IPR050072">
    <property type="entry name" value="Peptidase_M20A"/>
</dbReference>
<dbReference type="PANTHER" id="PTHR43808">
    <property type="entry name" value="ACETYLORNITHINE DEACETYLASE"/>
    <property type="match status" value="1"/>
</dbReference>
<dbReference type="PANTHER" id="PTHR43808:SF8">
    <property type="entry name" value="PEPTIDASE M20 DIMERISATION DOMAIN-CONTAINING PROTEIN"/>
    <property type="match status" value="1"/>
</dbReference>
<dbReference type="Pfam" id="PF07687">
    <property type="entry name" value="M20_dimer"/>
    <property type="match status" value="1"/>
</dbReference>
<dbReference type="Pfam" id="PF01546">
    <property type="entry name" value="Peptidase_M20"/>
    <property type="match status" value="1"/>
</dbReference>
<dbReference type="SUPFAM" id="SSF55031">
    <property type="entry name" value="Bacterial exopeptidase dimerisation domain"/>
    <property type="match status" value="1"/>
</dbReference>
<dbReference type="SUPFAM" id="SSF53187">
    <property type="entry name" value="Zn-dependent exopeptidases"/>
    <property type="match status" value="1"/>
</dbReference>
<dbReference type="PROSITE" id="PS00758">
    <property type="entry name" value="ARGE_DAPE_CPG2_1"/>
    <property type="match status" value="1"/>
</dbReference>
<keyword id="KW-0325">Glycoprotein</keyword>
<keyword id="KW-0378">Hydrolase</keyword>
<keyword id="KW-0479">Metal-binding</keyword>
<keyword id="KW-0645">Protease</keyword>
<keyword id="KW-1185">Reference proteome</keyword>
<keyword id="KW-0964">Secreted</keyword>
<keyword id="KW-0732">Signal</keyword>
<keyword id="KW-0862">Zinc</keyword>
<gene>
    <name type="ORF">PMAA_093910</name>
</gene>
<proteinExistence type="inferred from homology"/>
<name>P20D1_TALMQ</name>
<accession>B6QHD2</accession>
<reference key="1">
    <citation type="journal article" date="2015" name="Genome Announc.">
        <title>Genome sequence of the AIDS-associated pathogen Penicillium marneffei (ATCC18224) and its near taxonomic relative Talaromyces stipitatus (ATCC10500).</title>
        <authorList>
            <person name="Nierman W.C."/>
            <person name="Fedorova-Abrams N.D."/>
            <person name="Andrianopoulos A."/>
        </authorList>
    </citation>
    <scope>NUCLEOTIDE SEQUENCE [LARGE SCALE GENOMIC DNA]</scope>
    <source>
        <strain>ATCC 18224 / CBS 334.59 / QM 7333</strain>
    </source>
</reference>